<protein>
    <recommendedName>
        <fullName>Uncharacterized WD repeat-containing protein slr0143</fullName>
    </recommendedName>
</protein>
<dbReference type="EMBL" id="BA000022">
    <property type="protein sequence ID" value="BAA18543.1"/>
    <property type="molecule type" value="Genomic_DNA"/>
</dbReference>
<dbReference type="PIR" id="S76414">
    <property type="entry name" value="S76414"/>
</dbReference>
<dbReference type="SMR" id="P74442"/>
<dbReference type="IntAct" id="P74442">
    <property type="interactions" value="8"/>
</dbReference>
<dbReference type="STRING" id="1148.gene:10499425"/>
<dbReference type="PaxDb" id="1148-1653631"/>
<dbReference type="EnsemblBacteria" id="BAA18543">
    <property type="protein sequence ID" value="BAA18543"/>
    <property type="gene ID" value="BAA18543"/>
</dbReference>
<dbReference type="KEGG" id="syn:slr0143"/>
<dbReference type="eggNOG" id="COG1672">
    <property type="taxonomic scope" value="Bacteria"/>
</dbReference>
<dbReference type="eggNOG" id="COG2319">
    <property type="taxonomic scope" value="Bacteria"/>
</dbReference>
<dbReference type="InParanoid" id="P74442"/>
<dbReference type="PhylomeDB" id="P74442"/>
<dbReference type="Proteomes" id="UP000001425">
    <property type="component" value="Chromosome"/>
</dbReference>
<dbReference type="CDD" id="cd00200">
    <property type="entry name" value="WD40"/>
    <property type="match status" value="1"/>
</dbReference>
<dbReference type="Gene3D" id="3.40.50.300">
    <property type="entry name" value="P-loop containing nucleotide triphosphate hydrolases"/>
    <property type="match status" value="1"/>
</dbReference>
<dbReference type="Gene3D" id="2.130.10.10">
    <property type="entry name" value="YVTN repeat-like/Quinoprotein amine dehydrogenase"/>
    <property type="match status" value="4"/>
</dbReference>
<dbReference type="InterPro" id="IPR020472">
    <property type="entry name" value="G-protein_beta_WD-40_rep"/>
</dbReference>
<dbReference type="InterPro" id="IPR027417">
    <property type="entry name" value="P-loop_NTPase"/>
</dbReference>
<dbReference type="InterPro" id="IPR015943">
    <property type="entry name" value="WD40/YVTN_repeat-like_dom_sf"/>
</dbReference>
<dbReference type="InterPro" id="IPR019775">
    <property type="entry name" value="WD40_repeat_CS"/>
</dbReference>
<dbReference type="InterPro" id="IPR036322">
    <property type="entry name" value="WD40_repeat_dom_sf"/>
</dbReference>
<dbReference type="InterPro" id="IPR001680">
    <property type="entry name" value="WD40_rpt"/>
</dbReference>
<dbReference type="PANTHER" id="PTHR19879">
    <property type="entry name" value="TRANSCRIPTION INITIATION FACTOR TFIID"/>
    <property type="match status" value="1"/>
</dbReference>
<dbReference type="PANTHER" id="PTHR19879:SF9">
    <property type="entry name" value="TRANSCRIPTION INITIATION FACTOR TFIID SUBUNIT 5"/>
    <property type="match status" value="1"/>
</dbReference>
<dbReference type="Pfam" id="PF14516">
    <property type="entry name" value="AAA_35"/>
    <property type="match status" value="1"/>
</dbReference>
<dbReference type="Pfam" id="PF00400">
    <property type="entry name" value="WD40"/>
    <property type="match status" value="9"/>
</dbReference>
<dbReference type="PRINTS" id="PR00320">
    <property type="entry name" value="GPROTEINBRPT"/>
</dbReference>
<dbReference type="SMART" id="SM00320">
    <property type="entry name" value="WD40"/>
    <property type="match status" value="11"/>
</dbReference>
<dbReference type="SUPFAM" id="SSF52540">
    <property type="entry name" value="P-loop containing nucleoside triphosphate hydrolases"/>
    <property type="match status" value="1"/>
</dbReference>
<dbReference type="SUPFAM" id="SSF50978">
    <property type="entry name" value="WD40 repeat-like"/>
    <property type="match status" value="2"/>
</dbReference>
<dbReference type="PROSITE" id="PS00678">
    <property type="entry name" value="WD_REPEATS_1"/>
    <property type="match status" value="2"/>
</dbReference>
<dbReference type="PROSITE" id="PS50082">
    <property type="entry name" value="WD_REPEATS_2"/>
    <property type="match status" value="9"/>
</dbReference>
<dbReference type="PROSITE" id="PS50294">
    <property type="entry name" value="WD_REPEATS_REGION"/>
    <property type="match status" value="2"/>
</dbReference>
<gene>
    <name type="ordered locus">slr0143</name>
</gene>
<accession>P74442</accession>
<sequence length="1191" mass="131907">MSPIALNLLQSTPYQVGGSLAANHPSYSQREADRELLAQLRAGKFCYVFNCRQMGKSSLRVRAMHQLQQDGVVCVSIDITSLGTEADPQKWYNGIITQLYLGLPLAGKVALKPWLREREQLSPIQKLREFVETIILQTIGDRQIVIFIDEIDKVLSLPFSLDDFFSYIRFCYNQRADDHEYNRLSFALFGVATPSDLIDNKTQTPFNIGQAIALTGFTLTEALPLSAGLPVDEVSAREILGEILAWTGGQPFLTQKVCELVAEALQKGDLDCQSQTIATTIAQLIEEKIIRHWESNDEPVHFRTIGDRLLKDQARSGQLLGLYQEILHKGAIPADDSVEQTVLRLTGLVVKVKGQLRPYNPIYQAIFNAQWVSKELNKLRPYGTNLQAWINSNYQDSSRLLRGEALREALAWASSKNLSGVDYRYLNASQNQEQEASLAANQILTQANVKAKRMISFGIVVLMMSLGGSAIALSQAYFATLKQQRSQQGTELQRLGTSAQRQFTFDQIPGLVTALEAGNQLHHLVKADETLSQYPATSPLVSLQQILSQIAEKNVLTGHRDGVTSVAISSHKNLIASASRDGTVHLWTPQGEFLREFTGHTGSIYRVDFSPNGKIFATAGQDQTVKIWDLDGNLLQTLKGHQDSVYSVSFSPDGEILASTSRDRTVRLWHWRSGKTLAVLGGHTKSVDDAQFSPDGQTLVSVCRDGQIRLWDLDGNLIRQFGLPEVAFFGVNWHPNGNLLAVAADDGTVRLWTPQGEIKATLSGHDEFVTRVVFTPDGKQLFSSSSNGSVIHWSTSGKMLKKYQGYPEAIFGLALASNGALLAIGAENNLVKVWDMSPKSDLVNLNLPAVLGAVAENAKTNTIALAMENEPLILFNTKNRSRQFLSDASQNLDRLKFSADGQWLLGQRGRQWQLWQLQTKSQLLKTWRTDISRVYDVDLRTTPTSPQWAIAMATGSGEVQLWQGTKNNQTSGNQSQGVPIELNDPIVLALGNSIQRKEPIRSVSLHPTLPQLAAGDEQGNLTLWNFDGTLIRSIVAHGDRLNQLQYSPNGKYLLSAGREGTAKIWSVEGQLLHTLKSDPLPIDQIAISPDSQWIATAASDGMVRLWDQQGNLRGEFTSTSGSLLGLDFNRQGQWLLAVAQNGDLQSWPVTPEKERLRQLVEQGCDWLRDYLATEKQPAQTYSLEFCQPTGN</sequence>
<feature type="chain" id="PRO_0000051516" description="Uncharacterized WD repeat-containing protein slr0143">
    <location>
        <begin position="1"/>
        <end position="1191"/>
    </location>
</feature>
<feature type="repeat" description="WD 1">
    <location>
        <begin position="558"/>
        <end position="588"/>
    </location>
</feature>
<feature type="repeat" description="WD 2">
    <location>
        <begin position="599"/>
        <end position="629"/>
    </location>
</feature>
<feature type="repeat" description="WD 3">
    <location>
        <begin position="640"/>
        <end position="670"/>
    </location>
</feature>
<feature type="repeat" description="WD 4">
    <location>
        <begin position="682"/>
        <end position="712"/>
    </location>
</feature>
<feature type="repeat" description="WD 5">
    <location>
        <begin position="723"/>
        <end position="753"/>
    </location>
</feature>
<feature type="repeat" description="WD 6">
    <location>
        <begin position="764"/>
        <end position="794"/>
    </location>
</feature>
<feature type="repeat" description="WD 7">
    <location>
        <begin position="805"/>
        <end position="835"/>
    </location>
</feature>
<feature type="repeat" description="WD 8">
    <location>
        <begin position="995"/>
        <end position="1025"/>
    </location>
</feature>
<feature type="repeat" description="WD 9">
    <location>
        <begin position="1036"/>
        <end position="1066"/>
    </location>
</feature>
<feature type="repeat" description="WD 10">
    <location>
        <begin position="1077"/>
        <end position="1107"/>
    </location>
</feature>
<feature type="repeat" description="WD 11">
    <location>
        <begin position="1118"/>
        <end position="1148"/>
    </location>
</feature>
<name>Y143_SYNY3</name>
<keyword id="KW-1185">Reference proteome</keyword>
<keyword id="KW-0677">Repeat</keyword>
<keyword id="KW-0853">WD repeat</keyword>
<proteinExistence type="predicted"/>
<reference key="1">
    <citation type="journal article" date="1996" name="DNA Res.">
        <title>Sequence analysis of the genome of the unicellular cyanobacterium Synechocystis sp. strain PCC6803. II. Sequence determination of the entire genome and assignment of potential protein-coding regions.</title>
        <authorList>
            <person name="Kaneko T."/>
            <person name="Sato S."/>
            <person name="Kotani H."/>
            <person name="Tanaka A."/>
            <person name="Asamizu E."/>
            <person name="Nakamura Y."/>
            <person name="Miyajima N."/>
            <person name="Hirosawa M."/>
            <person name="Sugiura M."/>
            <person name="Sasamoto S."/>
            <person name="Kimura T."/>
            <person name="Hosouchi T."/>
            <person name="Matsuno A."/>
            <person name="Muraki A."/>
            <person name="Nakazaki N."/>
            <person name="Naruo K."/>
            <person name="Okumura S."/>
            <person name="Shimpo S."/>
            <person name="Takeuchi C."/>
            <person name="Wada T."/>
            <person name="Watanabe A."/>
            <person name="Yamada M."/>
            <person name="Yasuda M."/>
            <person name="Tabata S."/>
        </authorList>
    </citation>
    <scope>NUCLEOTIDE SEQUENCE [LARGE SCALE GENOMIC DNA]</scope>
    <source>
        <strain>ATCC 27184 / PCC 6803 / Kazusa</strain>
    </source>
</reference>
<organism>
    <name type="scientific">Synechocystis sp. (strain ATCC 27184 / PCC 6803 / Kazusa)</name>
    <dbReference type="NCBI Taxonomy" id="1111708"/>
    <lineage>
        <taxon>Bacteria</taxon>
        <taxon>Bacillati</taxon>
        <taxon>Cyanobacteriota</taxon>
        <taxon>Cyanophyceae</taxon>
        <taxon>Synechococcales</taxon>
        <taxon>Merismopediaceae</taxon>
        <taxon>Synechocystis</taxon>
    </lineage>
</organism>